<proteinExistence type="evidence at transcript level"/>
<feature type="transit peptide" description="Chloroplast" evidence="1">
    <location>
        <begin position="1"/>
        <end position="49"/>
    </location>
</feature>
<feature type="chain" id="PRO_0000031531" description="Ribulose bisphosphate carboxylase small subunit, chloroplastic 5" evidence="1">
    <location>
        <begin position="50"/>
        <end position="182"/>
    </location>
</feature>
<keyword id="KW-0113">Calvin cycle</keyword>
<keyword id="KW-0120">Carbon dioxide fixation</keyword>
<keyword id="KW-0150">Chloroplast</keyword>
<keyword id="KW-0601">Photorespiration</keyword>
<keyword id="KW-0602">Photosynthesis</keyword>
<keyword id="KW-0934">Plastid</keyword>
<keyword id="KW-0809">Transit peptide</keyword>
<protein>
    <recommendedName>
        <fullName evidence="1">Ribulose bisphosphate carboxylase small subunit, chloroplastic 5</fullName>
        <shortName evidence="1">RuBisCO small subunit 5</shortName>
    </recommendedName>
</protein>
<accession>Q08185</accession>
<comment type="function">
    <text evidence="1">RuBisCO catalyzes two reactions: the carboxylation of D-ribulose 1,5-bisphosphate, the primary event in carbon dioxide fixation, as well as the oxidative fragmentation of the pentose substrate. Both reactions occur simultaneously and in competition at the same active site. Although the small subunit is not catalytic it is essential for maximal activity.</text>
</comment>
<comment type="subunit">
    <text evidence="1">Heterohexadecamer of 8 large and 8 small subunits.</text>
</comment>
<comment type="subcellular location">
    <subcellularLocation>
        <location evidence="1">Plastid</location>
        <location evidence="1">Chloroplast</location>
    </subcellularLocation>
</comment>
<comment type="induction">
    <text evidence="2">No expression of this mRNA was seen in leaves.</text>
</comment>
<comment type="miscellaneous">
    <text evidence="1">The basic functional RuBisCO is composed of a large chain homodimer in a 'head-to-tail' conformation. In form I RuBisCO this homodimer is arranged in a barrel-like tetramer with the small subunits forming a tetrameric 'cap' on each end of the 'barrel'.</text>
</comment>
<comment type="similarity">
    <text evidence="1">Belongs to the RuBisCO small chain family.</text>
</comment>
<organism>
    <name type="scientific">Mesembryanthemum crystallinum</name>
    <name type="common">Common ice plant</name>
    <name type="synonym">Cryophytum crystallinum</name>
    <dbReference type="NCBI Taxonomy" id="3544"/>
    <lineage>
        <taxon>Eukaryota</taxon>
        <taxon>Viridiplantae</taxon>
        <taxon>Streptophyta</taxon>
        <taxon>Embryophyta</taxon>
        <taxon>Tracheophyta</taxon>
        <taxon>Spermatophyta</taxon>
        <taxon>Magnoliopsida</taxon>
        <taxon>eudicotyledons</taxon>
        <taxon>Gunneridae</taxon>
        <taxon>Pentapetalae</taxon>
        <taxon>Caryophyllales</taxon>
        <taxon>Aizoaceae</taxon>
        <taxon>Mesembryanthemum</taxon>
        <taxon>Mesembryanthemum subgen. Cryophytum</taxon>
    </lineage>
</organism>
<gene>
    <name evidence="1" type="primary">RBCS5</name>
    <name evidence="3" type="synonym">RBCS-5</name>
</gene>
<sequence>MASSLMSNAATTMAAATTTAQANMVAPFNGLKSISAFPVTRKNNDITSVASNGGRVQCMVWPPLGMKKFETLSYLPPLSEESLLKEVQYLLNNGWVPCLEFEPTHGFVYREHGNTPGYYDGRYWTMWKLPMFGCTDPSQVVAELEEAKKAYPEAFIRIIGFDNVRQVQCVSFIAYKPASYGA</sequence>
<dbReference type="EMBL" id="L10215">
    <property type="protein sequence ID" value="AAA03697.1"/>
    <property type="molecule type" value="Unassigned_DNA"/>
</dbReference>
<dbReference type="SMR" id="Q08185"/>
<dbReference type="GO" id="GO:0009507">
    <property type="term" value="C:chloroplast"/>
    <property type="evidence" value="ECO:0007669"/>
    <property type="project" value="UniProtKB-SubCell"/>
</dbReference>
<dbReference type="GO" id="GO:0016984">
    <property type="term" value="F:ribulose-bisphosphate carboxylase activity"/>
    <property type="evidence" value="ECO:0007669"/>
    <property type="project" value="UniProtKB-UniRule"/>
</dbReference>
<dbReference type="GO" id="GO:0009853">
    <property type="term" value="P:photorespiration"/>
    <property type="evidence" value="ECO:0007669"/>
    <property type="project" value="UniProtKB-KW"/>
</dbReference>
<dbReference type="GO" id="GO:0019253">
    <property type="term" value="P:reductive pentose-phosphate cycle"/>
    <property type="evidence" value="ECO:0007669"/>
    <property type="project" value="UniProtKB-UniRule"/>
</dbReference>
<dbReference type="CDD" id="cd03527">
    <property type="entry name" value="RuBisCO_small"/>
    <property type="match status" value="1"/>
</dbReference>
<dbReference type="FunFam" id="3.30.190.10:FF:000001">
    <property type="entry name" value="Ribulose bisphosphate carboxylase small chain, chloroplastic"/>
    <property type="match status" value="1"/>
</dbReference>
<dbReference type="Gene3D" id="3.30.190.10">
    <property type="entry name" value="Ribulose bisphosphate carboxylase, small subunit"/>
    <property type="match status" value="1"/>
</dbReference>
<dbReference type="HAMAP" id="MF_00859">
    <property type="entry name" value="RuBisCO_S_bact"/>
    <property type="match status" value="1"/>
</dbReference>
<dbReference type="InterPro" id="IPR024681">
    <property type="entry name" value="RuBisCO_ssu"/>
</dbReference>
<dbReference type="InterPro" id="IPR000894">
    <property type="entry name" value="RuBisCO_ssu_dom"/>
</dbReference>
<dbReference type="InterPro" id="IPR024680">
    <property type="entry name" value="RuBisCO_ssu_N"/>
</dbReference>
<dbReference type="InterPro" id="IPR036385">
    <property type="entry name" value="RuBisCO_ssu_sf"/>
</dbReference>
<dbReference type="PANTHER" id="PTHR31262">
    <property type="entry name" value="RIBULOSE BISPHOSPHATE CARBOXYLASE SMALL CHAIN 1, CHLOROPLASTIC"/>
    <property type="match status" value="1"/>
</dbReference>
<dbReference type="PANTHER" id="PTHR31262:SF10">
    <property type="entry name" value="RIBULOSE BISPHOSPHATE CARBOXYLASE SMALL SUBUNIT 1A, CHLOROPLASTIC-RELATED"/>
    <property type="match status" value="1"/>
</dbReference>
<dbReference type="Pfam" id="PF12338">
    <property type="entry name" value="RbcS"/>
    <property type="match status" value="1"/>
</dbReference>
<dbReference type="Pfam" id="PF00101">
    <property type="entry name" value="RuBisCO_small"/>
    <property type="match status" value="1"/>
</dbReference>
<dbReference type="PRINTS" id="PR00152">
    <property type="entry name" value="RUBISCOSMALL"/>
</dbReference>
<dbReference type="SMART" id="SM00961">
    <property type="entry name" value="RuBisCO_small"/>
    <property type="match status" value="1"/>
</dbReference>
<dbReference type="SUPFAM" id="SSF55239">
    <property type="entry name" value="RuBisCO, small subunit"/>
    <property type="match status" value="1"/>
</dbReference>
<reference key="1">
    <citation type="journal article" date="1993" name="Mol. Gen. Genet.">
        <title>The six genes of the Rubisco small subunit multigene family from Mesembryanthemum crystallinum, a facultative CAM plant.</title>
        <authorList>
            <person name="Derocher E.J."/>
            <person name="Quigley F."/>
            <person name="Mache R."/>
            <person name="Bohnert H.J."/>
        </authorList>
    </citation>
    <scope>NUCLEOTIDE SEQUENCE</scope>
    <scope>INDUCTION</scope>
</reference>
<evidence type="ECO:0000255" key="1">
    <source>
        <dbReference type="HAMAP-Rule" id="MF_00860"/>
    </source>
</evidence>
<evidence type="ECO:0000269" key="2">
    <source>
    </source>
</evidence>
<evidence type="ECO:0000303" key="3">
    <source>
    </source>
</evidence>
<name>RBS5_MESCR</name>